<evidence type="ECO:0000255" key="1">
    <source>
        <dbReference type="HAMAP-Rule" id="MF_01416"/>
    </source>
</evidence>
<gene>
    <name evidence="1" type="primary">atpH</name>
    <name type="ordered locus">ACP_1031</name>
</gene>
<protein>
    <recommendedName>
        <fullName evidence="1">ATP synthase subunit delta</fullName>
    </recommendedName>
    <alternativeName>
        <fullName evidence="1">ATP synthase F(1) sector subunit delta</fullName>
    </alternativeName>
    <alternativeName>
        <fullName evidence="1">F-type ATPase subunit delta</fullName>
        <shortName evidence="1">F-ATPase subunit delta</shortName>
    </alternativeName>
</protein>
<organism>
    <name type="scientific">Acidobacterium capsulatum (strain ATCC 51196 / DSM 11244 / BCRC 80197 / JCM 7670 / NBRC 15755 / NCIMB 13165 / 161)</name>
    <dbReference type="NCBI Taxonomy" id="240015"/>
    <lineage>
        <taxon>Bacteria</taxon>
        <taxon>Pseudomonadati</taxon>
        <taxon>Acidobacteriota</taxon>
        <taxon>Terriglobia</taxon>
        <taxon>Terriglobales</taxon>
        <taxon>Acidobacteriaceae</taxon>
        <taxon>Acidobacterium</taxon>
    </lineage>
</organism>
<accession>C1F404</accession>
<sequence length="179" mass="19936">MAAFAARYARAFADVVAEAHLPLEQVQQQLDDFMATWNGAADLREVFLDPSFPAEEKVAILDRMNQKLGLAPVVRNFLAVVLQHERMHAMEEILKEFREEMNRRLGITAVSITSARALNEAERKSLLEQVGTLAEGRVDASFHEDASLLGGVVVQIGSKVYDGSVRGRFARLEEQLAVR</sequence>
<feature type="chain" id="PRO_0000382049" description="ATP synthase subunit delta">
    <location>
        <begin position="1"/>
        <end position="179"/>
    </location>
</feature>
<comment type="function">
    <text evidence="1">F(1)F(0) ATP synthase produces ATP from ADP in the presence of a proton or sodium gradient. F-type ATPases consist of two structural domains, F(1) containing the extramembraneous catalytic core and F(0) containing the membrane proton channel, linked together by a central stalk and a peripheral stalk. During catalysis, ATP synthesis in the catalytic domain of F(1) is coupled via a rotary mechanism of the central stalk subunits to proton translocation.</text>
</comment>
<comment type="function">
    <text evidence="1">This protein is part of the stalk that links CF(0) to CF(1). It either transmits conformational changes from CF(0) to CF(1) or is implicated in proton conduction.</text>
</comment>
<comment type="subunit">
    <text evidence="1">F-type ATPases have 2 components, F(1) - the catalytic core - and F(0) - the membrane proton channel. F(1) has five subunits: alpha(3), beta(3), gamma(1), delta(1), epsilon(1). F(0) has three main subunits: a(1), b(2) and c(10-14). The alpha and beta chains form an alternating ring which encloses part of the gamma chain. F(1) is attached to F(0) by a central stalk formed by the gamma and epsilon chains, while a peripheral stalk is formed by the delta and b chains.</text>
</comment>
<comment type="subcellular location">
    <subcellularLocation>
        <location evidence="1">Cell inner membrane</location>
        <topology evidence="1">Peripheral membrane protein</topology>
    </subcellularLocation>
</comment>
<comment type="similarity">
    <text evidence="1">Belongs to the ATPase delta chain family.</text>
</comment>
<proteinExistence type="inferred from homology"/>
<keyword id="KW-0066">ATP synthesis</keyword>
<keyword id="KW-0997">Cell inner membrane</keyword>
<keyword id="KW-1003">Cell membrane</keyword>
<keyword id="KW-0139">CF(1)</keyword>
<keyword id="KW-0375">Hydrogen ion transport</keyword>
<keyword id="KW-0406">Ion transport</keyword>
<keyword id="KW-0472">Membrane</keyword>
<keyword id="KW-1185">Reference proteome</keyword>
<keyword id="KW-0813">Transport</keyword>
<dbReference type="EMBL" id="CP001472">
    <property type="protein sequence ID" value="ACO33431.1"/>
    <property type="molecule type" value="Genomic_DNA"/>
</dbReference>
<dbReference type="RefSeq" id="WP_015896190.1">
    <property type="nucleotide sequence ID" value="NC_012483.1"/>
</dbReference>
<dbReference type="SMR" id="C1F404"/>
<dbReference type="FunCoup" id="C1F404">
    <property type="interactions" value="368"/>
</dbReference>
<dbReference type="STRING" id="240015.ACP_1031"/>
<dbReference type="KEGG" id="aca:ACP_1031"/>
<dbReference type="eggNOG" id="COG0712">
    <property type="taxonomic scope" value="Bacteria"/>
</dbReference>
<dbReference type="HOGENOM" id="CLU_085114_4_1_0"/>
<dbReference type="InParanoid" id="C1F404"/>
<dbReference type="OrthoDB" id="9802471at2"/>
<dbReference type="Proteomes" id="UP000002207">
    <property type="component" value="Chromosome"/>
</dbReference>
<dbReference type="GO" id="GO:0005886">
    <property type="term" value="C:plasma membrane"/>
    <property type="evidence" value="ECO:0007669"/>
    <property type="project" value="UniProtKB-SubCell"/>
</dbReference>
<dbReference type="GO" id="GO:0045259">
    <property type="term" value="C:proton-transporting ATP synthase complex"/>
    <property type="evidence" value="ECO:0007669"/>
    <property type="project" value="UniProtKB-KW"/>
</dbReference>
<dbReference type="GO" id="GO:0046933">
    <property type="term" value="F:proton-transporting ATP synthase activity, rotational mechanism"/>
    <property type="evidence" value="ECO:0007669"/>
    <property type="project" value="UniProtKB-UniRule"/>
</dbReference>
<dbReference type="Gene3D" id="1.10.520.20">
    <property type="entry name" value="N-terminal domain of the delta subunit of the F1F0-ATP synthase"/>
    <property type="match status" value="1"/>
</dbReference>
<dbReference type="HAMAP" id="MF_01416">
    <property type="entry name" value="ATP_synth_delta_bact"/>
    <property type="match status" value="1"/>
</dbReference>
<dbReference type="InterPro" id="IPR026015">
    <property type="entry name" value="ATP_synth_OSCP/delta_N_sf"/>
</dbReference>
<dbReference type="InterPro" id="IPR000711">
    <property type="entry name" value="ATPase_OSCP/dsu"/>
</dbReference>
<dbReference type="NCBIfam" id="TIGR01145">
    <property type="entry name" value="ATP_synt_delta"/>
    <property type="match status" value="1"/>
</dbReference>
<dbReference type="PANTHER" id="PTHR11910">
    <property type="entry name" value="ATP SYNTHASE DELTA CHAIN"/>
    <property type="match status" value="1"/>
</dbReference>
<dbReference type="Pfam" id="PF00213">
    <property type="entry name" value="OSCP"/>
    <property type="match status" value="1"/>
</dbReference>
<dbReference type="PRINTS" id="PR00125">
    <property type="entry name" value="ATPASEDELTA"/>
</dbReference>
<dbReference type="SUPFAM" id="SSF47928">
    <property type="entry name" value="N-terminal domain of the delta subunit of the F1F0-ATP synthase"/>
    <property type="match status" value="1"/>
</dbReference>
<reference key="1">
    <citation type="journal article" date="2009" name="Appl. Environ. Microbiol.">
        <title>Three genomes from the phylum Acidobacteria provide insight into the lifestyles of these microorganisms in soils.</title>
        <authorList>
            <person name="Ward N.L."/>
            <person name="Challacombe J.F."/>
            <person name="Janssen P.H."/>
            <person name="Henrissat B."/>
            <person name="Coutinho P.M."/>
            <person name="Wu M."/>
            <person name="Xie G."/>
            <person name="Haft D.H."/>
            <person name="Sait M."/>
            <person name="Badger J."/>
            <person name="Barabote R.D."/>
            <person name="Bradley B."/>
            <person name="Brettin T.S."/>
            <person name="Brinkac L.M."/>
            <person name="Bruce D."/>
            <person name="Creasy T."/>
            <person name="Daugherty S.C."/>
            <person name="Davidsen T.M."/>
            <person name="DeBoy R.T."/>
            <person name="Detter J.C."/>
            <person name="Dodson R.J."/>
            <person name="Durkin A.S."/>
            <person name="Ganapathy A."/>
            <person name="Gwinn-Giglio M."/>
            <person name="Han C.S."/>
            <person name="Khouri H."/>
            <person name="Kiss H."/>
            <person name="Kothari S.P."/>
            <person name="Madupu R."/>
            <person name="Nelson K.E."/>
            <person name="Nelson W.C."/>
            <person name="Paulsen I."/>
            <person name="Penn K."/>
            <person name="Ren Q."/>
            <person name="Rosovitz M.J."/>
            <person name="Selengut J.D."/>
            <person name="Shrivastava S."/>
            <person name="Sullivan S.A."/>
            <person name="Tapia R."/>
            <person name="Thompson L.S."/>
            <person name="Watkins K.L."/>
            <person name="Yang Q."/>
            <person name="Yu C."/>
            <person name="Zafar N."/>
            <person name="Zhou L."/>
            <person name="Kuske C.R."/>
        </authorList>
    </citation>
    <scope>NUCLEOTIDE SEQUENCE [LARGE SCALE GENOMIC DNA]</scope>
    <source>
        <strain>ATCC 51196 / DSM 11244 / BCRC 80197 / JCM 7670 / NBRC 15755 / NCIMB 13165 / 161</strain>
    </source>
</reference>
<name>ATPD_ACIC5</name>